<evidence type="ECO:0000255" key="1">
    <source>
        <dbReference type="HAMAP-Rule" id="MF_03057"/>
    </source>
</evidence>
<evidence type="ECO:0000256" key="2">
    <source>
        <dbReference type="SAM" id="MobiDB-lite"/>
    </source>
</evidence>
<accession>P0CR33</accession>
<accession>D3NQ36</accession>
<accession>Q55ZP1</accession>
<accession>Q5KP03</accession>
<proteinExistence type="inferred from homology"/>
<reference key="1">
    <citation type="journal article" date="2005" name="Science">
        <title>The genome of the basidiomycetous yeast and human pathogen Cryptococcus neoformans.</title>
        <authorList>
            <person name="Loftus B.J."/>
            <person name="Fung E."/>
            <person name="Roncaglia P."/>
            <person name="Rowley D."/>
            <person name="Amedeo P."/>
            <person name="Bruno D."/>
            <person name="Vamathevan J."/>
            <person name="Miranda M."/>
            <person name="Anderson I.J."/>
            <person name="Fraser J.A."/>
            <person name="Allen J.E."/>
            <person name="Bosdet I.E."/>
            <person name="Brent M.R."/>
            <person name="Chiu R."/>
            <person name="Doering T.L."/>
            <person name="Donlin M.J."/>
            <person name="D'Souza C.A."/>
            <person name="Fox D.S."/>
            <person name="Grinberg V."/>
            <person name="Fu J."/>
            <person name="Fukushima M."/>
            <person name="Haas B.J."/>
            <person name="Huang J.C."/>
            <person name="Janbon G."/>
            <person name="Jones S.J.M."/>
            <person name="Koo H.L."/>
            <person name="Krzywinski M.I."/>
            <person name="Kwon-Chung K.J."/>
            <person name="Lengeler K.B."/>
            <person name="Maiti R."/>
            <person name="Marra M.A."/>
            <person name="Marra R.E."/>
            <person name="Mathewson C.A."/>
            <person name="Mitchell T.G."/>
            <person name="Pertea M."/>
            <person name="Riggs F.R."/>
            <person name="Salzberg S.L."/>
            <person name="Schein J.E."/>
            <person name="Shvartsbeyn A."/>
            <person name="Shin H."/>
            <person name="Shumway M."/>
            <person name="Specht C.A."/>
            <person name="Suh B.B."/>
            <person name="Tenney A."/>
            <person name="Utterback T.R."/>
            <person name="Wickes B.L."/>
            <person name="Wortman J.R."/>
            <person name="Wye N.H."/>
            <person name="Kronstad J.W."/>
            <person name="Lodge J.K."/>
            <person name="Heitman J."/>
            <person name="Davis R.W."/>
            <person name="Fraser C.M."/>
            <person name="Hyman R.W."/>
        </authorList>
    </citation>
    <scope>NUCLEOTIDE SEQUENCE [LARGE SCALE GENOMIC DNA]</scope>
    <source>
        <strain>B-3501A</strain>
    </source>
</reference>
<feature type="chain" id="PRO_0000410278" description="Succinate dehydrogenase assembly factor 2, mitochondrial">
    <location>
        <begin position="1"/>
        <end position="175"/>
    </location>
</feature>
<feature type="region of interest" description="Disordered" evidence="2">
    <location>
        <begin position="42"/>
        <end position="71"/>
    </location>
</feature>
<feature type="compositionally biased region" description="Polar residues" evidence="2">
    <location>
        <begin position="51"/>
        <end position="60"/>
    </location>
</feature>
<comment type="function">
    <text evidence="1">Plays an essential role in the assembly of succinate dehydrogenase (SDH), an enzyme complex (also referred to as respiratory complex II) that is a component of both the tricarboxylic acid (TCA) cycle and the mitochondrial electron transport chain, and which couples the oxidation of succinate to fumarate with the reduction of ubiquinone (coenzyme Q) to ubiquinol. Required for flavinylation (covalent attachment of FAD) of the flavoprotein subunit of the SDH catalytic dimer.</text>
</comment>
<comment type="subunit">
    <text evidence="1">Interacts with the flavoprotein subunit within the SDH catalytic dimer.</text>
</comment>
<comment type="subcellular location">
    <subcellularLocation>
        <location evidence="1">Mitochondrion matrix</location>
    </subcellularLocation>
</comment>
<comment type="miscellaneous">
    <text evidence="1">This protein may be expected to contain an N-terminal transit peptide but none has been predicted.</text>
</comment>
<comment type="similarity">
    <text evidence="1">Belongs to the SDHAF2 family.</text>
</comment>
<gene>
    <name type="ordered locus">CNBA4490</name>
</gene>
<sequence length="175" mass="20251">MSVLRALPRVARVVRPAPPSLRSISTTNTIFKSPTADPFPLPFSDPELAHANNSLPSNSEEWPLPEPLDRTGEDEKTLRARLIYQTRKRGTLETDLILSTFARDELPNMDFEEMKQFDKLLDEPDWDIFYWSVKKRDPPARWKGTPLLEKLQKHAKNEGKVVRMMPELMQKEPDL</sequence>
<name>SDHF2_CRYNB</name>
<organism>
    <name type="scientific">Cryptococcus neoformans var. neoformans serotype D (strain B-3501A)</name>
    <name type="common">Filobasidiella neoformans</name>
    <dbReference type="NCBI Taxonomy" id="283643"/>
    <lineage>
        <taxon>Eukaryota</taxon>
        <taxon>Fungi</taxon>
        <taxon>Dikarya</taxon>
        <taxon>Basidiomycota</taxon>
        <taxon>Agaricomycotina</taxon>
        <taxon>Tremellomycetes</taxon>
        <taxon>Tremellales</taxon>
        <taxon>Cryptococcaceae</taxon>
        <taxon>Cryptococcus</taxon>
        <taxon>Cryptococcus neoformans species complex</taxon>
    </lineage>
</organism>
<dbReference type="EMBL" id="AAEY01000002">
    <property type="protein sequence ID" value="EAL23333.1"/>
    <property type="molecule type" value="Genomic_DNA"/>
</dbReference>
<dbReference type="RefSeq" id="XP_777980.1">
    <property type="nucleotide sequence ID" value="XM_772887.1"/>
</dbReference>
<dbReference type="SMR" id="P0CR33"/>
<dbReference type="EnsemblFungi" id="AAW41035">
    <property type="protein sequence ID" value="AAW41035"/>
    <property type="gene ID" value="CNA04680"/>
</dbReference>
<dbReference type="GeneID" id="4933711"/>
<dbReference type="KEGG" id="cnb:CNBA4490"/>
<dbReference type="VEuPathDB" id="FungiDB:CNBA4490"/>
<dbReference type="HOGENOM" id="CLU_103054_0_0_1"/>
<dbReference type="OrthoDB" id="996at5206"/>
<dbReference type="GO" id="GO:0005759">
    <property type="term" value="C:mitochondrial matrix"/>
    <property type="evidence" value="ECO:0000250"/>
    <property type="project" value="UniProtKB"/>
</dbReference>
<dbReference type="GO" id="GO:0006121">
    <property type="term" value="P:mitochondrial electron transport, succinate to ubiquinone"/>
    <property type="evidence" value="ECO:0000250"/>
    <property type="project" value="UniProtKB"/>
</dbReference>
<dbReference type="GO" id="GO:0034553">
    <property type="term" value="P:mitochondrial respiratory chain complex II assembly"/>
    <property type="evidence" value="ECO:0007669"/>
    <property type="project" value="EnsemblFungi"/>
</dbReference>
<dbReference type="GO" id="GO:0018293">
    <property type="term" value="P:protein-FAD linkage"/>
    <property type="evidence" value="ECO:0000250"/>
    <property type="project" value="UniProtKB"/>
</dbReference>
<dbReference type="GO" id="GO:0006099">
    <property type="term" value="P:tricarboxylic acid cycle"/>
    <property type="evidence" value="ECO:0007669"/>
    <property type="project" value="EnsemblFungi"/>
</dbReference>
<dbReference type="FunFam" id="1.10.150.250:FF:000004">
    <property type="entry name" value="Succinate dehydrogenase assembly factor 2, mitochondrial"/>
    <property type="match status" value="1"/>
</dbReference>
<dbReference type="Gene3D" id="1.10.150.250">
    <property type="entry name" value="Flavinator of succinate dehydrogenase"/>
    <property type="match status" value="1"/>
</dbReference>
<dbReference type="HAMAP" id="MF_03057">
    <property type="entry name" value="SDHAF2"/>
    <property type="match status" value="1"/>
</dbReference>
<dbReference type="InterPro" id="IPR005631">
    <property type="entry name" value="SDH"/>
</dbReference>
<dbReference type="InterPro" id="IPR036714">
    <property type="entry name" value="SDH_sf"/>
</dbReference>
<dbReference type="InterPro" id="IPR028882">
    <property type="entry name" value="SDHAF2"/>
</dbReference>
<dbReference type="PANTHER" id="PTHR12469">
    <property type="entry name" value="PROTEIN EMI5 HOMOLOG, MITOCHONDRIAL"/>
    <property type="match status" value="1"/>
</dbReference>
<dbReference type="PANTHER" id="PTHR12469:SF2">
    <property type="entry name" value="SUCCINATE DEHYDROGENASE ASSEMBLY FACTOR 2, MITOCHONDRIAL"/>
    <property type="match status" value="1"/>
</dbReference>
<dbReference type="Pfam" id="PF03937">
    <property type="entry name" value="Sdh5"/>
    <property type="match status" value="1"/>
</dbReference>
<dbReference type="SUPFAM" id="SSF109910">
    <property type="entry name" value="YgfY-like"/>
    <property type="match status" value="1"/>
</dbReference>
<keyword id="KW-0143">Chaperone</keyword>
<keyword id="KW-0496">Mitochondrion</keyword>
<protein>
    <recommendedName>
        <fullName evidence="1">Succinate dehydrogenase assembly factor 2, mitochondrial</fullName>
        <shortName evidence="1">SDH assembly factor 2</shortName>
        <shortName evidence="1">SDHAF2</shortName>
    </recommendedName>
</protein>